<accession>A1TAB5</accession>
<proteinExistence type="inferred from homology"/>
<sequence length="347" mass="38055">MAEQPVDLSDEALAQAVSAASRAFDQASTLDELAKAKTEHLGDRSPIALARQALGSLPKTDRADAGKRVNVARTQAQAGYDDRLAALRAERDAEVLVAERIDVTLPSTRQPVGARHPITILAENVADTFVAMGWELAEGPEVETEQFNFDALNFPPDHPARSEQDTFHIAPDGSRQVLRTHTSPVQVRTLLERELPVYVISIGRTFRTDELDATHTPVFHQVEGLAVDKGLTMAHLRGTLDAFARAQFGPQGRTRFRPHFFPFTEPSAEVDIWFPNKKGGPGWVEWGGCGMVNPNVLRACGIDPEVYSGFAFGMGLERTLQFRNGIPDMRDMVEGDVRFSLPFGVGA</sequence>
<protein>
    <recommendedName>
        <fullName evidence="1">Phenylalanine--tRNA ligase alpha subunit</fullName>
        <ecNumber evidence="1">6.1.1.20</ecNumber>
    </recommendedName>
    <alternativeName>
        <fullName evidence="1">Phenylalanyl-tRNA synthetase alpha subunit</fullName>
        <shortName evidence="1">PheRS</shortName>
    </alternativeName>
</protein>
<organism>
    <name type="scientific">Mycolicibacterium vanbaalenii (strain DSM 7251 / JCM 13017 / BCRC 16820 / KCTC 9966 / NRRL B-24157 / PYR-1)</name>
    <name type="common">Mycobacterium vanbaalenii</name>
    <dbReference type="NCBI Taxonomy" id="350058"/>
    <lineage>
        <taxon>Bacteria</taxon>
        <taxon>Bacillati</taxon>
        <taxon>Actinomycetota</taxon>
        <taxon>Actinomycetes</taxon>
        <taxon>Mycobacteriales</taxon>
        <taxon>Mycobacteriaceae</taxon>
        <taxon>Mycolicibacterium</taxon>
    </lineage>
</organism>
<keyword id="KW-0030">Aminoacyl-tRNA synthetase</keyword>
<keyword id="KW-0067">ATP-binding</keyword>
<keyword id="KW-0963">Cytoplasm</keyword>
<keyword id="KW-0436">Ligase</keyword>
<keyword id="KW-0460">Magnesium</keyword>
<keyword id="KW-0479">Metal-binding</keyword>
<keyword id="KW-0547">Nucleotide-binding</keyword>
<keyword id="KW-0648">Protein biosynthesis</keyword>
<gene>
    <name evidence="1" type="primary">pheS</name>
    <name type="ordered locus">Mvan_3317</name>
</gene>
<evidence type="ECO:0000255" key="1">
    <source>
        <dbReference type="HAMAP-Rule" id="MF_00281"/>
    </source>
</evidence>
<dbReference type="EC" id="6.1.1.20" evidence="1"/>
<dbReference type="EMBL" id="CP000511">
    <property type="protein sequence ID" value="ABM14115.1"/>
    <property type="molecule type" value="Genomic_DNA"/>
</dbReference>
<dbReference type="RefSeq" id="WP_011780520.1">
    <property type="nucleotide sequence ID" value="NZ_JACKSD010000031.1"/>
</dbReference>
<dbReference type="SMR" id="A1TAB5"/>
<dbReference type="STRING" id="350058.Mvan_3317"/>
<dbReference type="KEGG" id="mva:Mvan_3317"/>
<dbReference type="eggNOG" id="COG0016">
    <property type="taxonomic scope" value="Bacteria"/>
</dbReference>
<dbReference type="HOGENOM" id="CLU_025086_0_1_11"/>
<dbReference type="Proteomes" id="UP000009159">
    <property type="component" value="Chromosome"/>
</dbReference>
<dbReference type="GO" id="GO:0005737">
    <property type="term" value="C:cytoplasm"/>
    <property type="evidence" value="ECO:0007669"/>
    <property type="project" value="UniProtKB-SubCell"/>
</dbReference>
<dbReference type="GO" id="GO:0005524">
    <property type="term" value="F:ATP binding"/>
    <property type="evidence" value="ECO:0007669"/>
    <property type="project" value="UniProtKB-UniRule"/>
</dbReference>
<dbReference type="GO" id="GO:0000287">
    <property type="term" value="F:magnesium ion binding"/>
    <property type="evidence" value="ECO:0007669"/>
    <property type="project" value="UniProtKB-UniRule"/>
</dbReference>
<dbReference type="GO" id="GO:0004826">
    <property type="term" value="F:phenylalanine-tRNA ligase activity"/>
    <property type="evidence" value="ECO:0007669"/>
    <property type="project" value="UniProtKB-UniRule"/>
</dbReference>
<dbReference type="GO" id="GO:0000049">
    <property type="term" value="F:tRNA binding"/>
    <property type="evidence" value="ECO:0007669"/>
    <property type="project" value="InterPro"/>
</dbReference>
<dbReference type="GO" id="GO:0006432">
    <property type="term" value="P:phenylalanyl-tRNA aminoacylation"/>
    <property type="evidence" value="ECO:0007669"/>
    <property type="project" value="UniProtKB-UniRule"/>
</dbReference>
<dbReference type="CDD" id="cd00496">
    <property type="entry name" value="PheRS_alpha_core"/>
    <property type="match status" value="1"/>
</dbReference>
<dbReference type="Gene3D" id="3.30.930.10">
    <property type="entry name" value="Bira Bifunctional Protein, Domain 2"/>
    <property type="match status" value="1"/>
</dbReference>
<dbReference type="HAMAP" id="MF_00281">
    <property type="entry name" value="Phe_tRNA_synth_alpha1"/>
    <property type="match status" value="1"/>
</dbReference>
<dbReference type="InterPro" id="IPR006195">
    <property type="entry name" value="aa-tRNA-synth_II"/>
</dbReference>
<dbReference type="InterPro" id="IPR045864">
    <property type="entry name" value="aa-tRNA-synth_II/BPL/LPL"/>
</dbReference>
<dbReference type="InterPro" id="IPR004529">
    <property type="entry name" value="Phe-tRNA-synth_IIc_asu"/>
</dbReference>
<dbReference type="InterPro" id="IPR004188">
    <property type="entry name" value="Phe-tRNA_ligase_II_N"/>
</dbReference>
<dbReference type="InterPro" id="IPR022911">
    <property type="entry name" value="Phe_tRNA_ligase_alpha1_bac"/>
</dbReference>
<dbReference type="InterPro" id="IPR002319">
    <property type="entry name" value="Phenylalanyl-tRNA_Synthase"/>
</dbReference>
<dbReference type="InterPro" id="IPR010978">
    <property type="entry name" value="tRNA-bd_arm"/>
</dbReference>
<dbReference type="NCBIfam" id="TIGR00468">
    <property type="entry name" value="pheS"/>
    <property type="match status" value="1"/>
</dbReference>
<dbReference type="PANTHER" id="PTHR11538:SF41">
    <property type="entry name" value="PHENYLALANINE--TRNA LIGASE, MITOCHONDRIAL"/>
    <property type="match status" value="1"/>
</dbReference>
<dbReference type="PANTHER" id="PTHR11538">
    <property type="entry name" value="PHENYLALANYL-TRNA SYNTHETASE"/>
    <property type="match status" value="1"/>
</dbReference>
<dbReference type="Pfam" id="PF02912">
    <property type="entry name" value="Phe_tRNA-synt_N"/>
    <property type="match status" value="1"/>
</dbReference>
<dbReference type="Pfam" id="PF01409">
    <property type="entry name" value="tRNA-synt_2d"/>
    <property type="match status" value="1"/>
</dbReference>
<dbReference type="SUPFAM" id="SSF55681">
    <property type="entry name" value="Class II aaRS and biotin synthetases"/>
    <property type="match status" value="1"/>
</dbReference>
<dbReference type="SUPFAM" id="SSF46589">
    <property type="entry name" value="tRNA-binding arm"/>
    <property type="match status" value="1"/>
</dbReference>
<dbReference type="PROSITE" id="PS50862">
    <property type="entry name" value="AA_TRNA_LIGASE_II"/>
    <property type="match status" value="1"/>
</dbReference>
<reference key="1">
    <citation type="submission" date="2006-12" db="EMBL/GenBank/DDBJ databases">
        <title>Complete sequence of Mycobacterium vanbaalenii PYR-1.</title>
        <authorList>
            <consortium name="US DOE Joint Genome Institute"/>
            <person name="Copeland A."/>
            <person name="Lucas S."/>
            <person name="Lapidus A."/>
            <person name="Barry K."/>
            <person name="Detter J.C."/>
            <person name="Glavina del Rio T."/>
            <person name="Hammon N."/>
            <person name="Israni S."/>
            <person name="Dalin E."/>
            <person name="Tice H."/>
            <person name="Pitluck S."/>
            <person name="Singan V."/>
            <person name="Schmutz J."/>
            <person name="Larimer F."/>
            <person name="Land M."/>
            <person name="Hauser L."/>
            <person name="Kyrpides N."/>
            <person name="Anderson I.J."/>
            <person name="Miller C."/>
            <person name="Richardson P."/>
        </authorList>
    </citation>
    <scope>NUCLEOTIDE SEQUENCE [LARGE SCALE GENOMIC DNA]</scope>
    <source>
        <strain>DSM 7251 / JCM 13017 / BCRC 16820 / KCTC 9966 / NRRL B-24157 / PYR-1</strain>
    </source>
</reference>
<name>SYFA_MYCVP</name>
<comment type="catalytic activity">
    <reaction evidence="1">
        <text>tRNA(Phe) + L-phenylalanine + ATP = L-phenylalanyl-tRNA(Phe) + AMP + diphosphate + H(+)</text>
        <dbReference type="Rhea" id="RHEA:19413"/>
        <dbReference type="Rhea" id="RHEA-COMP:9668"/>
        <dbReference type="Rhea" id="RHEA-COMP:9699"/>
        <dbReference type="ChEBI" id="CHEBI:15378"/>
        <dbReference type="ChEBI" id="CHEBI:30616"/>
        <dbReference type="ChEBI" id="CHEBI:33019"/>
        <dbReference type="ChEBI" id="CHEBI:58095"/>
        <dbReference type="ChEBI" id="CHEBI:78442"/>
        <dbReference type="ChEBI" id="CHEBI:78531"/>
        <dbReference type="ChEBI" id="CHEBI:456215"/>
        <dbReference type="EC" id="6.1.1.20"/>
    </reaction>
</comment>
<comment type="cofactor">
    <cofactor evidence="1">
        <name>Mg(2+)</name>
        <dbReference type="ChEBI" id="CHEBI:18420"/>
    </cofactor>
    <text evidence="1">Binds 2 magnesium ions per tetramer.</text>
</comment>
<comment type="subunit">
    <text evidence="1">Tetramer of two alpha and two beta subunits.</text>
</comment>
<comment type="subcellular location">
    <subcellularLocation>
        <location evidence="1">Cytoplasm</location>
    </subcellularLocation>
</comment>
<comment type="similarity">
    <text evidence="1">Belongs to the class-II aminoacyl-tRNA synthetase family. Phe-tRNA synthetase alpha subunit type 1 subfamily.</text>
</comment>
<feature type="chain" id="PRO_1000006863" description="Phenylalanine--tRNA ligase alpha subunit">
    <location>
        <begin position="1"/>
        <end position="347"/>
    </location>
</feature>
<feature type="binding site" evidence="1">
    <location>
        <position position="265"/>
    </location>
    <ligand>
        <name>Mg(2+)</name>
        <dbReference type="ChEBI" id="CHEBI:18420"/>
        <note>shared with beta subunit</note>
    </ligand>
</feature>